<dbReference type="EMBL" id="L12579">
    <property type="protein sequence ID" value="AAA35654.1"/>
    <property type="molecule type" value="mRNA"/>
</dbReference>
<dbReference type="EMBL" id="AK125076">
    <property type="protein sequence ID" value="BAG54135.1"/>
    <property type="molecule type" value="mRNA"/>
</dbReference>
<dbReference type="EMBL" id="AK125097">
    <property type="protein sequence ID" value="BAG54140.1"/>
    <property type="molecule type" value="mRNA"/>
</dbReference>
<dbReference type="EMBL" id="AK303151">
    <property type="protein sequence ID" value="BAG64254.1"/>
    <property type="molecule type" value="mRNA"/>
</dbReference>
<dbReference type="EMBL" id="AK222832">
    <property type="protein sequence ID" value="BAD96552.1"/>
    <property type="molecule type" value="mRNA"/>
</dbReference>
<dbReference type="EMBL" id="AC005072">
    <property type="status" value="NOT_ANNOTATED_CDS"/>
    <property type="molecule type" value="Genomic_DNA"/>
</dbReference>
<dbReference type="EMBL" id="AC005086">
    <property type="protein sequence ID" value="AAP22331.1"/>
    <property type="molecule type" value="Genomic_DNA"/>
</dbReference>
<dbReference type="EMBL" id="AC005088">
    <property type="status" value="NOT_ANNOTATED_CDS"/>
    <property type="molecule type" value="Genomic_DNA"/>
</dbReference>
<dbReference type="EMBL" id="AC005096">
    <property type="protein sequence ID" value="AAS07410.1"/>
    <property type="molecule type" value="Genomic_DNA"/>
</dbReference>
<dbReference type="EMBL" id="AC005103">
    <property type="protein sequence ID" value="AAS07388.1"/>
    <property type="molecule type" value="Genomic_DNA"/>
</dbReference>
<dbReference type="EMBL" id="AC092788">
    <property type="protein sequence ID" value="AAS07523.1"/>
    <property type="molecule type" value="Genomic_DNA"/>
</dbReference>
<dbReference type="EMBL" id="CH471197">
    <property type="protein sequence ID" value="EAW50227.1"/>
    <property type="molecule type" value="Genomic_DNA"/>
</dbReference>
<dbReference type="EMBL" id="BC025422">
    <property type="protein sequence ID" value="AAH25422.1"/>
    <property type="molecule type" value="mRNA"/>
</dbReference>
<dbReference type="CCDS" id="CCDS47672.1">
    <molecule id="Q13948-2"/>
</dbReference>
<dbReference type="CCDS" id="CCDS56500.1">
    <molecule id="Q13948-10"/>
</dbReference>
<dbReference type="CCDS" id="CCDS5720.1">
    <molecule id="Q13948-1"/>
</dbReference>
<dbReference type="CCDS" id="CCDS59071.1">
    <molecule id="Q13948-9"/>
</dbReference>
<dbReference type="RefSeq" id="NP_001189473.1">
    <molecule id="Q13948-10"/>
    <property type="nucleotide sequence ID" value="NM_001202544.3"/>
</dbReference>
<dbReference type="RefSeq" id="NP_001189474.1">
    <property type="nucleotide sequence ID" value="NM_001202545.2"/>
</dbReference>
<dbReference type="RefSeq" id="NP_001189475.1">
    <molecule id="Q13948-9"/>
    <property type="nucleotide sequence ID" value="NM_001202546.3"/>
</dbReference>
<dbReference type="RefSeq" id="NP_001904.2">
    <molecule id="Q13948-1"/>
    <property type="nucleotide sequence ID" value="NM_001913.4"/>
</dbReference>
<dbReference type="RefSeq" id="NP_852477.1">
    <molecule id="Q13948-2"/>
    <property type="nucleotide sequence ID" value="NM_181500.4"/>
</dbReference>
<dbReference type="PDB" id="8WQE">
    <property type="method" value="EM"/>
    <property type="resolution" value="3.38 A"/>
    <property type="chains" value="K/L=656-678"/>
</dbReference>
<dbReference type="PDB" id="8WQF">
    <property type="method" value="EM"/>
    <property type="resolution" value="3.27 A"/>
    <property type="chains" value="K=656-678"/>
</dbReference>
<dbReference type="PDB" id="8WQI">
    <property type="method" value="EM"/>
    <property type="resolution" value="3.50 A"/>
    <property type="chains" value="G=656-678"/>
</dbReference>
<dbReference type="PDBsum" id="8WQE"/>
<dbReference type="PDBsum" id="8WQF"/>
<dbReference type="PDBsum" id="8WQI"/>
<dbReference type="EMDB" id="EMD-37742"/>
<dbReference type="EMDB" id="EMD-37743"/>
<dbReference type="EMDB" id="EMD-37746"/>
<dbReference type="SMR" id="Q13948"/>
<dbReference type="BioGRID" id="107903">
    <property type="interactions" value="222"/>
</dbReference>
<dbReference type="IntAct" id="Q13948">
    <property type="interactions" value="64"/>
</dbReference>
<dbReference type="MINT" id="Q13948"/>
<dbReference type="iPTMnet" id="Q13948"/>
<dbReference type="SwissPalm" id="Q13948"/>
<dbReference type="BioMuta" id="CUX1"/>
<dbReference type="DMDM" id="85681028"/>
<dbReference type="jPOST" id="Q13948"/>
<dbReference type="MassIVE" id="Q13948"/>
<dbReference type="ProteomicsDB" id="32483"/>
<dbReference type="ProteomicsDB" id="59765">
    <molecule id="Q13948-1"/>
</dbReference>
<dbReference type="ProteomicsDB" id="59766">
    <molecule id="Q13948-2"/>
</dbReference>
<dbReference type="Pumba" id="Q13948"/>
<dbReference type="Antibodypedia" id="48390">
    <property type="antibodies" value="420 antibodies from 35 providers"/>
</dbReference>
<dbReference type="DNASU" id="1523"/>
<dbReference type="Ensembl" id="ENST00000292538.9">
    <molecule id="Q13948-1"/>
    <property type="protein sequence ID" value="ENSP00000292538.4"/>
    <property type="gene ID" value="ENSG00000257923.12"/>
</dbReference>
<dbReference type="Ensembl" id="ENST00000393824.7">
    <molecule id="Q13948-9"/>
    <property type="protein sequence ID" value="ENSP00000377410.3"/>
    <property type="gene ID" value="ENSG00000257923.12"/>
</dbReference>
<dbReference type="Ensembl" id="ENST00000437600.9">
    <molecule id="Q13948-2"/>
    <property type="protein sequence ID" value="ENSP00000414091.5"/>
    <property type="gene ID" value="ENSG00000257923.12"/>
</dbReference>
<dbReference type="Ensembl" id="ENST00000547394.6">
    <molecule id="Q13948-10"/>
    <property type="protein sequence ID" value="ENSP00000449371.2"/>
    <property type="gene ID" value="ENSG00000257923.12"/>
</dbReference>
<dbReference type="Ensembl" id="ENST00000622516.6">
    <molecule id="Q13948-1"/>
    <property type="protein sequence ID" value="ENSP00000484760.2"/>
    <property type="gene ID" value="ENSG00000257923.12"/>
</dbReference>
<dbReference type="GeneID" id="1523"/>
<dbReference type="KEGG" id="hsa:1523"/>
<dbReference type="UCSC" id="uc003uyt.4">
    <molecule id="Q13948-1"/>
    <property type="organism name" value="human"/>
</dbReference>
<dbReference type="AGR" id="HGNC:2557"/>
<dbReference type="CTD" id="1523"/>
<dbReference type="DisGeNET" id="1523"/>
<dbReference type="GeneCards" id="CUX1"/>
<dbReference type="HGNC" id="HGNC:2557">
    <property type="gene designation" value="CUX1"/>
</dbReference>
<dbReference type="HPA" id="ENSG00000257923">
    <property type="expression patterns" value="Low tissue specificity"/>
</dbReference>
<dbReference type="MalaCards" id="CUX1"/>
<dbReference type="MIM" id="116896">
    <property type="type" value="gene"/>
</dbReference>
<dbReference type="neXtProt" id="NX_Q13948"/>
<dbReference type="OpenTargets" id="ENSG00000257923"/>
<dbReference type="PharmGKB" id="PA162382924"/>
<dbReference type="VEuPathDB" id="HostDB:ENSG00000257923"/>
<dbReference type="GeneTree" id="ENSGT00940000159751"/>
<dbReference type="OrthoDB" id="10257567at2759"/>
<dbReference type="BioCyc" id="MetaCyc:ENSG00000170275-MONOMER"/>
<dbReference type="PathwayCommons" id="Q13948"/>
<dbReference type="Reactome" id="R-HSA-6811438">
    <property type="pathway name" value="Intra-Golgi traffic"/>
</dbReference>
<dbReference type="SignaLink" id="Q13948"/>
<dbReference type="BioGRID-ORCS" id="1523">
    <property type="hits" value="26 hits in 1205 CRISPR screens"/>
</dbReference>
<dbReference type="ChiTaRS" id="CUX1">
    <property type="organism name" value="human"/>
</dbReference>
<dbReference type="GenomeRNAi" id="1523"/>
<dbReference type="Pharos" id="Q13948">
    <property type="development level" value="Tbio"/>
</dbReference>
<dbReference type="Proteomes" id="UP000005640">
    <property type="component" value="Chromosome 7"/>
</dbReference>
<dbReference type="Bgee" id="ENSG00000257923">
    <property type="expression patterns" value="Expressed in secondary oocyte and 208 other cell types or tissues"/>
</dbReference>
<dbReference type="ExpressionAtlas" id="Q13948">
    <property type="expression patterns" value="baseline and differential"/>
</dbReference>
<dbReference type="GO" id="GO:0005794">
    <property type="term" value="C:Golgi apparatus"/>
    <property type="evidence" value="ECO:0000314"/>
    <property type="project" value="HPA"/>
</dbReference>
<dbReference type="GO" id="GO:0000139">
    <property type="term" value="C:Golgi membrane"/>
    <property type="evidence" value="ECO:0000304"/>
    <property type="project" value="Reactome"/>
</dbReference>
<dbReference type="GO" id="GO:0005654">
    <property type="term" value="C:nucleoplasm"/>
    <property type="evidence" value="ECO:0000314"/>
    <property type="project" value="HPA"/>
</dbReference>
<dbReference type="GO" id="GO:0006891">
    <property type="term" value="P:intra-Golgi vesicle-mediated transport"/>
    <property type="evidence" value="ECO:0007669"/>
    <property type="project" value="InterPro"/>
</dbReference>
<dbReference type="InterPro" id="IPR012955">
    <property type="entry name" value="CASP_C"/>
</dbReference>
<dbReference type="PANTHER" id="PTHR14043">
    <property type="entry name" value="CCAAT DISPLACEMENT PROTEIN-RELATED"/>
    <property type="match status" value="1"/>
</dbReference>
<dbReference type="PANTHER" id="PTHR14043:SF15">
    <property type="entry name" value="PROTEIN CASP"/>
    <property type="match status" value="1"/>
</dbReference>
<dbReference type="Pfam" id="PF08172">
    <property type="entry name" value="CASP_C"/>
    <property type="match status" value="1"/>
</dbReference>
<dbReference type="Pfam" id="PF25398">
    <property type="entry name" value="CUX1_N"/>
    <property type="match status" value="1"/>
</dbReference>
<feature type="chain" id="PRO_0000071790" description="Protein CASP">
    <location>
        <begin position="1"/>
        <end position="678"/>
    </location>
</feature>
<feature type="topological domain" description="Cytoplasmic" evidence="1">
    <location>
        <begin position="1"/>
        <end position="619"/>
    </location>
</feature>
<feature type="transmembrane region" description="Helical; Anchor for type IV membrane protein" evidence="1">
    <location>
        <begin position="620"/>
        <end position="640"/>
    </location>
</feature>
<feature type="topological domain" description="Lumenal" evidence="1">
    <location>
        <begin position="641"/>
        <end position="678"/>
    </location>
</feature>
<feature type="coiled-coil region" evidence="1">
    <location>
        <begin position="67"/>
        <end position="450"/>
    </location>
</feature>
<feature type="coiled-coil region" evidence="1">
    <location>
        <begin position="502"/>
        <end position="556"/>
    </location>
</feature>
<feature type="modified residue" description="Phosphoserine" evidence="10">
    <location>
        <position position="586"/>
    </location>
</feature>
<feature type="splice variant" id="VSP_045593" description="In isoform 9." evidence="8">
    <location>
        <begin position="22"/>
        <end position="58"/>
    </location>
</feature>
<feature type="splice variant" id="VSP_045927" description="In isoform 10." evidence="8">
    <location>
        <begin position="58"/>
        <end position="73"/>
    </location>
</feature>
<feature type="splice variant" id="VSP_040094" description="In isoform 8 and isoform 9." evidence="8">
    <location>
        <begin position="288"/>
        <end position="289"/>
    </location>
</feature>
<feature type="sequence variant" id="VAR_024923" description="In dbSNP:rs803064." evidence="3 7">
    <original>A</original>
    <variation>T</variation>
    <location>
        <position position="464"/>
    </location>
</feature>
<feature type="sequence variant" id="VAR_036285" description="In a breast cancer sample; somatic mutation." evidence="6">
    <original>S</original>
    <variation>G</variation>
    <location>
        <position position="490"/>
    </location>
</feature>
<feature type="sequence variant" id="VAR_024924" description="In dbSNP:rs2230103." evidence="4">
    <original>I</original>
    <variation>V</variation>
    <location>
        <position position="545"/>
    </location>
</feature>
<feature type="sequence variant" id="VAR_036286" description="In a colorectal cancer sample; somatic mutation; dbSNP:rs1287689842." evidence="6">
    <original>R</original>
    <variation>C</variation>
    <location>
        <position position="609"/>
    </location>
</feature>
<feature type="mutagenesis site" description="Retained in the endoplasmic reticulum." evidence="2">
    <original>Y</original>
    <variation>L</variation>
    <location>
        <position position="624"/>
    </location>
</feature>
<feature type="mutagenesis site" description="No effect on subcellular location." evidence="2">
    <original>H</original>
    <variation>L</variation>
    <location>
        <position position="629"/>
    </location>
</feature>
<feature type="sequence conflict" description="In Ref. 6; AAH25422." evidence="9" ref="6">
    <original>N</original>
    <variation>S</variation>
    <location>
        <position position="407"/>
    </location>
</feature>
<feature type="sequence conflict" description="In Ref. 2; BAG64254." evidence="9" ref="2">
    <original>I</original>
    <variation>V</variation>
    <location>
        <position position="455"/>
    </location>
</feature>
<feature type="sequence conflict" description="In Ref. 2; BAG64254." evidence="9" ref="2">
    <original>L</original>
    <variation>V</variation>
    <location>
        <position position="525"/>
    </location>
</feature>
<feature type="sequence conflict" description="In Ref. 3; BAD96552." evidence="9" ref="3">
    <original>I</original>
    <variation>V</variation>
    <location>
        <position position="551"/>
    </location>
</feature>
<feature type="sequence conflict" description="In Ref. 2; BAG54140." evidence="9" ref="2">
    <original>S</original>
    <variation>P</variation>
    <location>
        <position position="613"/>
    </location>
</feature>
<feature type="sequence conflict" description="In Ref. 1; AAA35654." evidence="9" ref="1">
    <original>F</original>
    <variation>L</variation>
    <location>
        <position position="657"/>
    </location>
</feature>
<feature type="helix" evidence="11">
    <location>
        <begin position="659"/>
        <end position="662"/>
    </location>
</feature>
<name>CASP_HUMAN</name>
<organism>
    <name type="scientific">Homo sapiens</name>
    <name type="common">Human</name>
    <dbReference type="NCBI Taxonomy" id="9606"/>
    <lineage>
        <taxon>Eukaryota</taxon>
        <taxon>Metazoa</taxon>
        <taxon>Chordata</taxon>
        <taxon>Craniata</taxon>
        <taxon>Vertebrata</taxon>
        <taxon>Euteleostomi</taxon>
        <taxon>Mammalia</taxon>
        <taxon>Eutheria</taxon>
        <taxon>Euarchontoglires</taxon>
        <taxon>Primates</taxon>
        <taxon>Haplorrhini</taxon>
        <taxon>Catarrhini</taxon>
        <taxon>Hominidae</taxon>
        <taxon>Homo</taxon>
    </lineage>
</organism>
<gene>
    <name type="primary">CUX1</name>
    <name type="synonym">CUTL1</name>
</gene>
<proteinExistence type="evidence at protein level"/>
<accession>Q13948</accession>
<accession>B3KWH3</accession>
<accession>B3KWH8</accession>
<accession>B4DZZ2</accession>
<accession>G3V1Z6</accession>
<accession>J3KPQ6</accession>
<accession>Q53GU9</accession>
<accession>Q8TBS3</accession>
<sequence>MAANVGSMFQYWKRFDLQQLQRELDATATVLANRQDESEQSRKRLIEQSREFKKNTPEDLRKQVAPLLKSFQGEIDALSKRSKEAEAAFLNVYKRLIDVPDPVPALDLGQQLQLKVQRLHDIETENQKLRETLEEYNKEFAEVKNQEVTIKALKEKIREYEQTLKNQAETIALEKEQKLQNDFAEKERKLQETQMSTTSKLEEAEHKVQSLQTALEKTRTELFDLKTKYDEETTAKADEIEMIMTDLERANQRAEVAQREAETLREQLSSANHSLQLASQIQKAPDVEQAIEVLTRSSLEVELAAKEREIAQLVEDVQRLQASLTKLRENSASQISQLEQQLSAKNSTLKQLEEKLKGQADYEEVKKELNILKSMEFAPSEGAGTQDAAKPLEVLLLEKNRSLQSENAALRISNSDLSGRCAELQVRITEAVATATEQRELIARLEQDLSIIQSIQRPDAEGAAEHRLEKIPEPIKEATALFYGPAAPASGALPEGQVDSLLSIISSQRERFRARNQELEAENRLAQHTLQALQSELDSLRADNIKLFEKIKFLQSYPGRGSGSDDTELRYSSQYEERLDPFSSFSKRERQRKYLSLSPWDKATLSMGRLVLSNKMARTIGFFYTLFLHCLVFLVLYKLAWSESMERDCATFCAKKFADHLHKFHENDNGAAAGDLWQ</sequence>
<keyword id="KW-0002">3D-structure</keyword>
<keyword id="KW-0025">Alternative splicing</keyword>
<keyword id="KW-0175">Coiled coil</keyword>
<keyword id="KW-1015">Disulfide bond</keyword>
<keyword id="KW-0333">Golgi apparatus</keyword>
<keyword id="KW-0472">Membrane</keyword>
<keyword id="KW-0597">Phosphoprotein</keyword>
<keyword id="KW-1267">Proteomics identification</keyword>
<keyword id="KW-1185">Reference proteome</keyword>
<keyword id="KW-0812">Transmembrane</keyword>
<keyword id="KW-1133">Transmembrane helix</keyword>
<keyword id="KW-0813">Transport</keyword>
<protein>
    <recommendedName>
        <fullName>Protein CASP</fullName>
    </recommendedName>
</protein>
<evidence type="ECO:0000255" key="1"/>
<evidence type="ECO:0000269" key="2">
    <source>
    </source>
</evidence>
<evidence type="ECO:0000269" key="3">
    <source>
    </source>
</evidence>
<evidence type="ECO:0000269" key="4">
    <source>
    </source>
</evidence>
<evidence type="ECO:0000269" key="5">
    <source>
    </source>
</evidence>
<evidence type="ECO:0000269" key="6">
    <source>
    </source>
</evidence>
<evidence type="ECO:0000269" key="7">
    <source ref="3"/>
</evidence>
<evidence type="ECO:0000303" key="8">
    <source>
    </source>
</evidence>
<evidence type="ECO:0000305" key="9"/>
<evidence type="ECO:0007744" key="10">
    <source>
    </source>
</evidence>
<evidence type="ECO:0007829" key="11">
    <source>
        <dbReference type="PDB" id="8WQE"/>
    </source>
</evidence>
<comment type="function">
    <text evidence="5">May be involved in intra-Golgi retrograde transport.</text>
</comment>
<comment type="subunit">
    <text evidence="2 5">Homodimer; disulfide-linked. Interacts with GOLGA5.</text>
</comment>
<comment type="subcellular location">
    <subcellularLocation>
        <location evidence="2">Golgi apparatus membrane</location>
        <topology evidence="2">Single-pass type IV membrane protein</topology>
    </subcellularLocation>
</comment>
<comment type="alternative products">
    <event type="alternative splicing"/>
    <isoform>
        <id>Q13948-1</id>
        <name>4</name>
        <name>CASP</name>
        <sequence type="displayed"/>
    </isoform>
    <isoform>
        <id>P39880-9</id>
        <name>11</name>
        <sequence type="external"/>
    </isoform>
    <isoform>
        <id>P39880-1</id>
        <name>1</name>
        <sequence type="external"/>
    </isoform>
    <isoform>
        <id>P39880-2</id>
        <name>2</name>
        <sequence type="external"/>
    </isoform>
    <isoform>
        <id>P39880-3</id>
        <name>3</name>
        <sequence type="external"/>
    </isoform>
    <isoform>
        <id>P39880-4</id>
        <name>5</name>
        <sequence type="external"/>
    </isoform>
    <isoform>
        <id>P39880-5</id>
        <name>6</name>
        <sequence type="external"/>
    </isoform>
    <isoform>
        <id>P39880-6</id>
        <name>7</name>
        <sequence type="external"/>
    </isoform>
    <isoform>
        <id>Q13948-2</id>
        <name>8</name>
        <sequence type="described" ref="VSP_040094"/>
    </isoform>
    <isoform>
        <id>Q13948-9</id>
        <name>9</name>
        <sequence type="described" ref="VSP_045593 VSP_040094"/>
    </isoform>
    <isoform>
        <id>Q13948-10</id>
        <name>10</name>
        <sequence type="described" ref="VSP_045927"/>
    </isoform>
    <text>Additional isoforms seem to exist.</text>
</comment>
<comment type="similarity">
    <text evidence="9">Belongs to the CASP family.</text>
</comment>
<comment type="online information" name="Atlas of Genetics and Cytogenetics in Oncology and Haematology">
    <link uri="https://atlasgeneticsoncology.org/gene/403/CUX1"/>
</comment>
<reference key="1">
    <citation type="journal article" date="1997" name="Gene">
        <title>CASP, a novel, highly conserved alternative-splicing product of the CDP/cut/cux gene, lacks cut-repeat and homeo DNA-binding domains, and interacts with full-length CDP in vitro.</title>
        <authorList>
            <person name="Lievens P.M.-J."/>
            <person name="Tufarelli C."/>
            <person name="Donady J.J."/>
            <person name="Stagg A."/>
            <person name="Neufeld E.J."/>
        </authorList>
    </citation>
    <scope>NUCLEOTIDE SEQUENCE [MRNA] (ISOFORM 1)</scope>
    <source>
        <tissue>Umbilical vein</tissue>
    </source>
</reference>
<reference key="2">
    <citation type="journal article" date="2004" name="Nat. Genet.">
        <title>Complete sequencing and characterization of 21,243 full-length human cDNAs.</title>
        <authorList>
            <person name="Ota T."/>
            <person name="Suzuki Y."/>
            <person name="Nishikawa T."/>
            <person name="Otsuki T."/>
            <person name="Sugiyama T."/>
            <person name="Irie R."/>
            <person name="Wakamatsu A."/>
            <person name="Hayashi K."/>
            <person name="Sato H."/>
            <person name="Nagai K."/>
            <person name="Kimura K."/>
            <person name="Makita H."/>
            <person name="Sekine M."/>
            <person name="Obayashi M."/>
            <person name="Nishi T."/>
            <person name="Shibahara T."/>
            <person name="Tanaka T."/>
            <person name="Ishii S."/>
            <person name="Yamamoto J."/>
            <person name="Saito K."/>
            <person name="Kawai Y."/>
            <person name="Isono Y."/>
            <person name="Nakamura Y."/>
            <person name="Nagahari K."/>
            <person name="Murakami K."/>
            <person name="Yasuda T."/>
            <person name="Iwayanagi T."/>
            <person name="Wagatsuma M."/>
            <person name="Shiratori A."/>
            <person name="Sudo H."/>
            <person name="Hosoiri T."/>
            <person name="Kaku Y."/>
            <person name="Kodaira H."/>
            <person name="Kondo H."/>
            <person name="Sugawara M."/>
            <person name="Takahashi M."/>
            <person name="Kanda K."/>
            <person name="Yokoi T."/>
            <person name="Furuya T."/>
            <person name="Kikkawa E."/>
            <person name="Omura Y."/>
            <person name="Abe K."/>
            <person name="Kamihara K."/>
            <person name="Katsuta N."/>
            <person name="Sato K."/>
            <person name="Tanikawa M."/>
            <person name="Yamazaki M."/>
            <person name="Ninomiya K."/>
            <person name="Ishibashi T."/>
            <person name="Yamashita H."/>
            <person name="Murakawa K."/>
            <person name="Fujimori K."/>
            <person name="Tanai H."/>
            <person name="Kimata M."/>
            <person name="Watanabe M."/>
            <person name="Hiraoka S."/>
            <person name="Chiba Y."/>
            <person name="Ishida S."/>
            <person name="Ono Y."/>
            <person name="Takiguchi S."/>
            <person name="Watanabe S."/>
            <person name="Yosida M."/>
            <person name="Hotuta T."/>
            <person name="Kusano J."/>
            <person name="Kanehori K."/>
            <person name="Takahashi-Fujii A."/>
            <person name="Hara H."/>
            <person name="Tanase T.-O."/>
            <person name="Nomura Y."/>
            <person name="Togiya S."/>
            <person name="Komai F."/>
            <person name="Hara R."/>
            <person name="Takeuchi K."/>
            <person name="Arita M."/>
            <person name="Imose N."/>
            <person name="Musashino K."/>
            <person name="Yuuki H."/>
            <person name="Oshima A."/>
            <person name="Sasaki N."/>
            <person name="Aotsuka S."/>
            <person name="Yoshikawa Y."/>
            <person name="Matsunawa H."/>
            <person name="Ichihara T."/>
            <person name="Shiohata N."/>
            <person name="Sano S."/>
            <person name="Moriya S."/>
            <person name="Momiyama H."/>
            <person name="Satoh N."/>
            <person name="Takami S."/>
            <person name="Terashima Y."/>
            <person name="Suzuki O."/>
            <person name="Nakagawa S."/>
            <person name="Senoh A."/>
            <person name="Mizoguchi H."/>
            <person name="Goto Y."/>
            <person name="Shimizu F."/>
            <person name="Wakebe H."/>
            <person name="Hishigaki H."/>
            <person name="Watanabe T."/>
            <person name="Sugiyama A."/>
            <person name="Takemoto M."/>
            <person name="Kawakami B."/>
            <person name="Yamazaki M."/>
            <person name="Watanabe K."/>
            <person name="Kumagai A."/>
            <person name="Itakura S."/>
            <person name="Fukuzumi Y."/>
            <person name="Fujimori Y."/>
            <person name="Komiyama M."/>
            <person name="Tashiro H."/>
            <person name="Tanigami A."/>
            <person name="Fujiwara T."/>
            <person name="Ono T."/>
            <person name="Yamada K."/>
            <person name="Fujii Y."/>
            <person name="Ozaki K."/>
            <person name="Hirao M."/>
            <person name="Ohmori Y."/>
            <person name="Kawabata A."/>
            <person name="Hikiji T."/>
            <person name="Kobatake N."/>
            <person name="Inagaki H."/>
            <person name="Ikema Y."/>
            <person name="Okamoto S."/>
            <person name="Okitani R."/>
            <person name="Kawakami T."/>
            <person name="Noguchi S."/>
            <person name="Itoh T."/>
            <person name="Shigeta K."/>
            <person name="Senba T."/>
            <person name="Matsumura K."/>
            <person name="Nakajima Y."/>
            <person name="Mizuno T."/>
            <person name="Morinaga M."/>
            <person name="Sasaki M."/>
            <person name="Togashi T."/>
            <person name="Oyama M."/>
            <person name="Hata H."/>
            <person name="Watanabe M."/>
            <person name="Komatsu T."/>
            <person name="Mizushima-Sugano J."/>
            <person name="Satoh T."/>
            <person name="Shirai Y."/>
            <person name="Takahashi Y."/>
            <person name="Nakagawa K."/>
            <person name="Okumura K."/>
            <person name="Nagase T."/>
            <person name="Nomura N."/>
            <person name="Kikuchi H."/>
            <person name="Masuho Y."/>
            <person name="Yamashita R."/>
            <person name="Nakai K."/>
            <person name="Yada T."/>
            <person name="Nakamura Y."/>
            <person name="Ohara O."/>
            <person name="Isogai T."/>
            <person name="Sugano S."/>
        </authorList>
    </citation>
    <scope>NUCLEOTIDE SEQUENCE [LARGE SCALE MRNA] (ISOFORMS 1; 9 AND 10)</scope>
    <scope>VARIANT THR-464</scope>
    <source>
        <tissue>Thalamus</tissue>
        <tissue>Thymus</tissue>
        <tissue>Tongue</tissue>
    </source>
</reference>
<reference key="3">
    <citation type="submission" date="2005-04" db="EMBL/GenBank/DDBJ databases">
        <authorList>
            <person name="Suzuki Y."/>
            <person name="Sugano S."/>
            <person name="Totoki Y."/>
            <person name="Toyoda A."/>
            <person name="Takeda T."/>
            <person name="Sakaki Y."/>
            <person name="Tanaka A."/>
            <person name="Yokoyama S."/>
        </authorList>
    </citation>
    <scope>NUCLEOTIDE SEQUENCE [LARGE SCALE MRNA] (ISOFORM 1)</scope>
    <scope>VARIANT THR-464</scope>
    <source>
        <tissue>Liver</tissue>
    </source>
</reference>
<reference key="4">
    <citation type="journal article" date="2003" name="Nature">
        <title>The DNA sequence of human chromosome 7.</title>
        <authorList>
            <person name="Hillier L.W."/>
            <person name="Fulton R.S."/>
            <person name="Fulton L.A."/>
            <person name="Graves T.A."/>
            <person name="Pepin K.H."/>
            <person name="Wagner-McPherson C."/>
            <person name="Layman D."/>
            <person name="Maas J."/>
            <person name="Jaeger S."/>
            <person name="Walker R."/>
            <person name="Wylie K."/>
            <person name="Sekhon M."/>
            <person name="Becker M.C."/>
            <person name="O'Laughlin M.D."/>
            <person name="Schaller M.E."/>
            <person name="Fewell G.A."/>
            <person name="Delehaunty K.D."/>
            <person name="Miner T.L."/>
            <person name="Nash W.E."/>
            <person name="Cordes M."/>
            <person name="Du H."/>
            <person name="Sun H."/>
            <person name="Edwards J."/>
            <person name="Bradshaw-Cordum H."/>
            <person name="Ali J."/>
            <person name="Andrews S."/>
            <person name="Isak A."/>
            <person name="Vanbrunt A."/>
            <person name="Nguyen C."/>
            <person name="Du F."/>
            <person name="Lamar B."/>
            <person name="Courtney L."/>
            <person name="Kalicki J."/>
            <person name="Ozersky P."/>
            <person name="Bielicki L."/>
            <person name="Scott K."/>
            <person name="Holmes A."/>
            <person name="Harkins R."/>
            <person name="Harris A."/>
            <person name="Strong C.M."/>
            <person name="Hou S."/>
            <person name="Tomlinson C."/>
            <person name="Dauphin-Kohlberg S."/>
            <person name="Kozlowicz-Reilly A."/>
            <person name="Leonard S."/>
            <person name="Rohlfing T."/>
            <person name="Rock S.M."/>
            <person name="Tin-Wollam A.-M."/>
            <person name="Abbott A."/>
            <person name="Minx P."/>
            <person name="Maupin R."/>
            <person name="Strowmatt C."/>
            <person name="Latreille P."/>
            <person name="Miller N."/>
            <person name="Johnson D."/>
            <person name="Murray J."/>
            <person name="Woessner J.P."/>
            <person name="Wendl M.C."/>
            <person name="Yang S.-P."/>
            <person name="Schultz B.R."/>
            <person name="Wallis J.W."/>
            <person name="Spieth J."/>
            <person name="Bieri T.A."/>
            <person name="Nelson J.O."/>
            <person name="Berkowicz N."/>
            <person name="Wohldmann P.E."/>
            <person name="Cook L.L."/>
            <person name="Hickenbotham M.T."/>
            <person name="Eldred J."/>
            <person name="Williams D."/>
            <person name="Bedell J.A."/>
            <person name="Mardis E.R."/>
            <person name="Clifton S.W."/>
            <person name="Chissoe S.L."/>
            <person name="Marra M.A."/>
            <person name="Raymond C."/>
            <person name="Haugen E."/>
            <person name="Gillett W."/>
            <person name="Zhou Y."/>
            <person name="James R."/>
            <person name="Phelps K."/>
            <person name="Iadanoto S."/>
            <person name="Bubb K."/>
            <person name="Simms E."/>
            <person name="Levy R."/>
            <person name="Clendenning J."/>
            <person name="Kaul R."/>
            <person name="Kent W.J."/>
            <person name="Furey T.S."/>
            <person name="Baertsch R.A."/>
            <person name="Brent M.R."/>
            <person name="Keibler E."/>
            <person name="Flicek P."/>
            <person name="Bork P."/>
            <person name="Suyama M."/>
            <person name="Bailey J.A."/>
            <person name="Portnoy M.E."/>
            <person name="Torrents D."/>
            <person name="Chinwalla A.T."/>
            <person name="Gish W.R."/>
            <person name="Eddy S.R."/>
            <person name="McPherson J.D."/>
            <person name="Olson M.V."/>
            <person name="Eichler E.E."/>
            <person name="Green E.D."/>
            <person name="Waterston R.H."/>
            <person name="Wilson R.K."/>
        </authorList>
    </citation>
    <scope>NUCLEOTIDE SEQUENCE [LARGE SCALE GENOMIC DNA]</scope>
</reference>
<reference key="5">
    <citation type="submission" date="2005-07" db="EMBL/GenBank/DDBJ databases">
        <authorList>
            <person name="Mural R.J."/>
            <person name="Istrail S."/>
            <person name="Sutton G.G."/>
            <person name="Florea L."/>
            <person name="Halpern A.L."/>
            <person name="Mobarry C.M."/>
            <person name="Lippert R."/>
            <person name="Walenz B."/>
            <person name="Shatkay H."/>
            <person name="Dew I."/>
            <person name="Miller J.R."/>
            <person name="Flanigan M.J."/>
            <person name="Edwards N.J."/>
            <person name="Bolanos R."/>
            <person name="Fasulo D."/>
            <person name="Halldorsson B.V."/>
            <person name="Hannenhalli S."/>
            <person name="Turner R."/>
            <person name="Yooseph S."/>
            <person name="Lu F."/>
            <person name="Nusskern D.R."/>
            <person name="Shue B.C."/>
            <person name="Zheng X.H."/>
            <person name="Zhong F."/>
            <person name="Delcher A.L."/>
            <person name="Huson D.H."/>
            <person name="Kravitz S.A."/>
            <person name="Mouchard L."/>
            <person name="Reinert K."/>
            <person name="Remington K.A."/>
            <person name="Clark A.G."/>
            <person name="Waterman M.S."/>
            <person name="Eichler E.E."/>
            <person name="Adams M.D."/>
            <person name="Hunkapiller M.W."/>
            <person name="Myers E.W."/>
            <person name="Venter J.C."/>
        </authorList>
    </citation>
    <scope>NUCLEOTIDE SEQUENCE [LARGE SCALE GENOMIC DNA]</scope>
</reference>
<reference key="6">
    <citation type="journal article" date="2004" name="Genome Res.">
        <title>The status, quality, and expansion of the NIH full-length cDNA project: the Mammalian Gene Collection (MGC).</title>
        <authorList>
            <consortium name="The MGC Project Team"/>
        </authorList>
    </citation>
    <scope>NUCLEOTIDE SEQUENCE [LARGE SCALE MRNA] (ISOFORM 2)</scope>
    <scope>VARIANT VAL-545</scope>
    <source>
        <tissue>Colon</tissue>
    </source>
</reference>
<reference key="7">
    <citation type="journal article" date="2000" name="Gene">
        <title>Exon/intron structure and alternative transcripts of the CUTL1 gene.</title>
        <authorList>
            <person name="Rong Zeng W."/>
            <person name="Soucie E."/>
            <person name="Sung Moon N."/>
            <person name="Martin-Soudant N."/>
            <person name="Berube G."/>
            <person name="Leduy L."/>
            <person name="Nepveu A."/>
        </authorList>
    </citation>
    <scope>ALTERNATIVE SPLICING</scope>
</reference>
<reference key="8">
    <citation type="journal article" date="2002" name="Mol. Biol. Cell">
        <title>CASP, the alternatively spliced product of the gene encoding the CCAAT-displacement protein transcription factor, is a Golgi membrane protein related to giantin.</title>
        <authorList>
            <person name="Gillingham A.K."/>
            <person name="Pfeifer A.C."/>
            <person name="Munro S."/>
        </authorList>
    </citation>
    <scope>SUBCELLULAR LOCATION</scope>
    <scope>ALTERNATIVE SPLICING</scope>
    <scope>SUBUNIT</scope>
    <scope>MUTAGENESIS OF TYR-624 AND HIS-629</scope>
</reference>
<reference key="9">
    <citation type="journal article" date="2005" name="Science">
        <title>Golgin tethers define subpopulations of COPI vesicles.</title>
        <authorList>
            <person name="Malsam J."/>
            <person name="Satoh A."/>
            <person name="Pelletier L."/>
            <person name="Warren G."/>
        </authorList>
    </citation>
    <scope>FUNCTION</scope>
    <scope>INTERACTION WITH GOLGA5</scope>
</reference>
<reference key="10">
    <citation type="journal article" date="2007" name="Science">
        <title>ATM and ATR substrate analysis reveals extensive protein networks responsive to DNA damage.</title>
        <authorList>
            <person name="Matsuoka S."/>
            <person name="Ballif B.A."/>
            <person name="Smogorzewska A."/>
            <person name="McDonald E.R. III"/>
            <person name="Hurov K.E."/>
            <person name="Luo J."/>
            <person name="Bakalarski C.E."/>
            <person name="Zhao Z."/>
            <person name="Solimini N."/>
            <person name="Lerenthal Y."/>
            <person name="Shiloh Y."/>
            <person name="Gygi S.P."/>
            <person name="Elledge S.J."/>
        </authorList>
    </citation>
    <scope>IDENTIFICATION BY MASS SPECTROMETRY [LARGE SCALE ANALYSIS]</scope>
    <source>
        <tissue>Embryonic kidney</tissue>
    </source>
</reference>
<reference key="11">
    <citation type="journal article" date="2011" name="BMC Syst. Biol.">
        <title>Initial characterization of the human central proteome.</title>
        <authorList>
            <person name="Burkard T.R."/>
            <person name="Planyavsky M."/>
            <person name="Kaupe I."/>
            <person name="Breitwieser F.P."/>
            <person name="Buerckstuemmer T."/>
            <person name="Bennett K.L."/>
            <person name="Superti-Furga G."/>
            <person name="Colinge J."/>
        </authorList>
    </citation>
    <scope>IDENTIFICATION BY MASS SPECTROMETRY [LARGE SCALE ANALYSIS]</scope>
</reference>
<reference key="12">
    <citation type="journal article" date="2013" name="J. Proteome Res.">
        <title>Toward a comprehensive characterization of a human cancer cell phosphoproteome.</title>
        <authorList>
            <person name="Zhou H."/>
            <person name="Di Palma S."/>
            <person name="Preisinger C."/>
            <person name="Peng M."/>
            <person name="Polat A.N."/>
            <person name="Heck A.J."/>
            <person name="Mohammed S."/>
        </authorList>
    </citation>
    <scope>PHOSPHORYLATION [LARGE SCALE ANALYSIS] AT SER-586</scope>
    <scope>IDENTIFICATION BY MASS SPECTROMETRY [LARGE SCALE ANALYSIS]</scope>
    <source>
        <tissue>Erythroleukemia</tissue>
    </source>
</reference>
<reference key="13">
    <citation type="journal article" date="2015" name="Proteomics">
        <title>N-terminome analysis of the human mitochondrial proteome.</title>
        <authorList>
            <person name="Vaca Jacome A.S."/>
            <person name="Rabilloud T."/>
            <person name="Schaeffer-Reiss C."/>
            <person name="Rompais M."/>
            <person name="Ayoub D."/>
            <person name="Lane L."/>
            <person name="Bairoch A."/>
            <person name="Van Dorsselaer A."/>
            <person name="Carapito C."/>
        </authorList>
    </citation>
    <scope>IDENTIFICATION BY MASS SPECTROMETRY [LARGE SCALE ANALYSIS]</scope>
</reference>
<reference key="14">
    <citation type="journal article" date="2006" name="Science">
        <title>The consensus coding sequences of human breast and colorectal cancers.</title>
        <authorList>
            <person name="Sjoeblom T."/>
            <person name="Jones S."/>
            <person name="Wood L.D."/>
            <person name="Parsons D.W."/>
            <person name="Lin J."/>
            <person name="Barber T.D."/>
            <person name="Mandelker D."/>
            <person name="Leary R.J."/>
            <person name="Ptak J."/>
            <person name="Silliman N."/>
            <person name="Szabo S."/>
            <person name="Buckhaults P."/>
            <person name="Farrell C."/>
            <person name="Meeh P."/>
            <person name="Markowitz S.D."/>
            <person name="Willis J."/>
            <person name="Dawson D."/>
            <person name="Willson J.K.V."/>
            <person name="Gazdar A.F."/>
            <person name="Hartigan J."/>
            <person name="Wu L."/>
            <person name="Liu C."/>
            <person name="Parmigiani G."/>
            <person name="Park B.H."/>
            <person name="Bachman K.E."/>
            <person name="Papadopoulos N."/>
            <person name="Vogelstein B."/>
            <person name="Kinzler K.W."/>
            <person name="Velculescu V.E."/>
        </authorList>
    </citation>
    <scope>VARIANTS [LARGE SCALE ANALYSIS] GLY-490 AND CYS-609</scope>
</reference>